<reference key="1">
    <citation type="journal article" date="2005" name="Infect. Immun.">
        <title>Whole-genome analyses of speciation events in pathogenic Brucellae.</title>
        <authorList>
            <person name="Chain P.S."/>
            <person name="Comerci D.J."/>
            <person name="Tolmasky M.E."/>
            <person name="Larimer F.W."/>
            <person name="Malfatti S.A."/>
            <person name="Vergez L.M."/>
            <person name="Aguero F."/>
            <person name="Land M.L."/>
            <person name="Ugalde R.A."/>
            <person name="Garcia E."/>
        </authorList>
    </citation>
    <scope>NUCLEOTIDE SEQUENCE [LARGE SCALE GENOMIC DNA]</scope>
    <source>
        <strain>2308</strain>
    </source>
</reference>
<organism>
    <name type="scientific">Brucella abortus (strain 2308)</name>
    <dbReference type="NCBI Taxonomy" id="359391"/>
    <lineage>
        <taxon>Bacteria</taxon>
        <taxon>Pseudomonadati</taxon>
        <taxon>Pseudomonadota</taxon>
        <taxon>Alphaproteobacteria</taxon>
        <taxon>Hyphomicrobiales</taxon>
        <taxon>Brucellaceae</taxon>
        <taxon>Brucella/Ochrobactrum group</taxon>
        <taxon>Brucella</taxon>
    </lineage>
</organism>
<proteinExistence type="inferred from homology"/>
<keyword id="KW-1003">Cell membrane</keyword>
<keyword id="KW-0285">Flavoprotein</keyword>
<keyword id="KW-0288">FMN</keyword>
<keyword id="KW-0472">Membrane</keyword>
<keyword id="KW-0560">Oxidoreductase</keyword>
<keyword id="KW-0665">Pyrimidine biosynthesis</keyword>
<keyword id="KW-1185">Reference proteome</keyword>
<accession>Q2YPG3</accession>
<comment type="function">
    <text evidence="1">Catalyzes the conversion of dihydroorotate to orotate with quinone as electron acceptor.</text>
</comment>
<comment type="catalytic activity">
    <reaction evidence="1">
        <text>(S)-dihydroorotate + a quinone = orotate + a quinol</text>
        <dbReference type="Rhea" id="RHEA:30187"/>
        <dbReference type="ChEBI" id="CHEBI:24646"/>
        <dbReference type="ChEBI" id="CHEBI:30839"/>
        <dbReference type="ChEBI" id="CHEBI:30864"/>
        <dbReference type="ChEBI" id="CHEBI:132124"/>
        <dbReference type="EC" id="1.3.5.2"/>
    </reaction>
</comment>
<comment type="cofactor">
    <cofactor evidence="1">
        <name>FMN</name>
        <dbReference type="ChEBI" id="CHEBI:58210"/>
    </cofactor>
    <text evidence="1">Binds 1 FMN per subunit.</text>
</comment>
<comment type="pathway">
    <text evidence="1">Pyrimidine metabolism; UMP biosynthesis via de novo pathway; orotate from (S)-dihydroorotate (quinone route): step 1/1.</text>
</comment>
<comment type="subunit">
    <text evidence="1">Monomer.</text>
</comment>
<comment type="subcellular location">
    <subcellularLocation>
        <location evidence="1">Cell membrane</location>
        <topology evidence="1">Peripheral membrane protein</topology>
    </subcellularLocation>
</comment>
<comment type="similarity">
    <text evidence="1">Belongs to the dihydroorotate dehydrogenase family. Type 2 subfamily.</text>
</comment>
<evidence type="ECO:0000255" key="1">
    <source>
        <dbReference type="HAMAP-Rule" id="MF_00225"/>
    </source>
</evidence>
<protein>
    <recommendedName>
        <fullName evidence="1">Dihydroorotate dehydrogenase (quinone)</fullName>
        <ecNumber evidence="1">1.3.5.2</ecNumber>
    </recommendedName>
    <alternativeName>
        <fullName evidence="1">DHOdehase</fullName>
        <shortName evidence="1">DHOD</shortName>
        <shortName evidence="1">DHODase</shortName>
    </alternativeName>
    <alternativeName>
        <fullName evidence="1">Dihydroorotate oxidase</fullName>
    </alternativeName>
</protein>
<feature type="chain" id="PRO_0000244529" description="Dihydroorotate dehydrogenase (quinone)">
    <location>
        <begin position="1"/>
        <end position="364"/>
    </location>
</feature>
<feature type="active site" description="Nucleophile" evidence="1">
    <location>
        <position position="173"/>
    </location>
</feature>
<feature type="binding site" evidence="1">
    <location>
        <begin position="61"/>
        <end position="65"/>
    </location>
    <ligand>
        <name>FMN</name>
        <dbReference type="ChEBI" id="CHEBI:58210"/>
    </ligand>
</feature>
<feature type="binding site" evidence="1">
    <location>
        <position position="65"/>
    </location>
    <ligand>
        <name>substrate</name>
    </ligand>
</feature>
<feature type="binding site" evidence="1">
    <location>
        <position position="85"/>
    </location>
    <ligand>
        <name>FMN</name>
        <dbReference type="ChEBI" id="CHEBI:58210"/>
    </ligand>
</feature>
<feature type="binding site" evidence="1">
    <location>
        <begin position="110"/>
        <end position="114"/>
    </location>
    <ligand>
        <name>substrate</name>
    </ligand>
</feature>
<feature type="binding site" evidence="1">
    <location>
        <position position="139"/>
    </location>
    <ligand>
        <name>FMN</name>
        <dbReference type="ChEBI" id="CHEBI:58210"/>
    </ligand>
</feature>
<feature type="binding site" evidence="1">
    <location>
        <position position="170"/>
    </location>
    <ligand>
        <name>FMN</name>
        <dbReference type="ChEBI" id="CHEBI:58210"/>
    </ligand>
</feature>
<feature type="binding site" evidence="1">
    <location>
        <position position="170"/>
    </location>
    <ligand>
        <name>substrate</name>
    </ligand>
</feature>
<feature type="binding site" evidence="1">
    <location>
        <position position="175"/>
    </location>
    <ligand>
        <name>substrate</name>
    </ligand>
</feature>
<feature type="binding site" evidence="1">
    <location>
        <position position="215"/>
    </location>
    <ligand>
        <name>FMN</name>
        <dbReference type="ChEBI" id="CHEBI:58210"/>
    </ligand>
</feature>
<feature type="binding site" evidence="1">
    <location>
        <position position="243"/>
    </location>
    <ligand>
        <name>FMN</name>
        <dbReference type="ChEBI" id="CHEBI:58210"/>
    </ligand>
</feature>
<feature type="binding site" evidence="1">
    <location>
        <begin position="244"/>
        <end position="245"/>
    </location>
    <ligand>
        <name>substrate</name>
    </ligand>
</feature>
<feature type="binding site" evidence="1">
    <location>
        <position position="266"/>
    </location>
    <ligand>
        <name>FMN</name>
        <dbReference type="ChEBI" id="CHEBI:58210"/>
    </ligand>
</feature>
<feature type="binding site" evidence="1">
    <location>
        <position position="295"/>
    </location>
    <ligand>
        <name>FMN</name>
        <dbReference type="ChEBI" id="CHEBI:58210"/>
    </ligand>
</feature>
<feature type="binding site" evidence="1">
    <location>
        <begin position="316"/>
        <end position="317"/>
    </location>
    <ligand>
        <name>FMN</name>
        <dbReference type="ChEBI" id="CHEBI:58210"/>
    </ligand>
</feature>
<dbReference type="EC" id="1.3.5.2" evidence="1"/>
<dbReference type="EMBL" id="AM040264">
    <property type="protein sequence ID" value="CAJ10297.1"/>
    <property type="molecule type" value="Genomic_DNA"/>
</dbReference>
<dbReference type="RefSeq" id="WP_002963475.1">
    <property type="nucleotide sequence ID" value="NZ_KN046823.1"/>
</dbReference>
<dbReference type="SMR" id="Q2YPG3"/>
<dbReference type="STRING" id="359391.BAB1_0341"/>
<dbReference type="KEGG" id="bmf:BAB1_0341"/>
<dbReference type="PATRIC" id="fig|359391.11.peg.2386"/>
<dbReference type="HOGENOM" id="CLU_013640_2_1_5"/>
<dbReference type="PhylomeDB" id="Q2YPG3"/>
<dbReference type="UniPathway" id="UPA00070">
    <property type="reaction ID" value="UER00946"/>
</dbReference>
<dbReference type="PRO" id="PR:Q2YPG3"/>
<dbReference type="Proteomes" id="UP000002719">
    <property type="component" value="Chromosome I"/>
</dbReference>
<dbReference type="GO" id="GO:0005737">
    <property type="term" value="C:cytoplasm"/>
    <property type="evidence" value="ECO:0007669"/>
    <property type="project" value="InterPro"/>
</dbReference>
<dbReference type="GO" id="GO:0005886">
    <property type="term" value="C:plasma membrane"/>
    <property type="evidence" value="ECO:0007669"/>
    <property type="project" value="UniProtKB-SubCell"/>
</dbReference>
<dbReference type="GO" id="GO:0106430">
    <property type="term" value="F:dihydroorotate dehydrogenase (quinone) activity"/>
    <property type="evidence" value="ECO:0007669"/>
    <property type="project" value="UniProtKB-EC"/>
</dbReference>
<dbReference type="GO" id="GO:0006207">
    <property type="term" value="P:'de novo' pyrimidine nucleobase biosynthetic process"/>
    <property type="evidence" value="ECO:0007669"/>
    <property type="project" value="InterPro"/>
</dbReference>
<dbReference type="GO" id="GO:0044205">
    <property type="term" value="P:'de novo' UMP biosynthetic process"/>
    <property type="evidence" value="ECO:0007669"/>
    <property type="project" value="UniProtKB-UniRule"/>
</dbReference>
<dbReference type="CDD" id="cd04738">
    <property type="entry name" value="DHOD_2_like"/>
    <property type="match status" value="1"/>
</dbReference>
<dbReference type="Gene3D" id="3.20.20.70">
    <property type="entry name" value="Aldolase class I"/>
    <property type="match status" value="1"/>
</dbReference>
<dbReference type="HAMAP" id="MF_00225">
    <property type="entry name" value="DHO_dh_type2"/>
    <property type="match status" value="1"/>
</dbReference>
<dbReference type="InterPro" id="IPR013785">
    <property type="entry name" value="Aldolase_TIM"/>
</dbReference>
<dbReference type="InterPro" id="IPR050074">
    <property type="entry name" value="DHO_dehydrogenase"/>
</dbReference>
<dbReference type="InterPro" id="IPR005719">
    <property type="entry name" value="Dihydroorotate_DH_2"/>
</dbReference>
<dbReference type="InterPro" id="IPR005720">
    <property type="entry name" value="Dihydroorotate_DH_cat"/>
</dbReference>
<dbReference type="InterPro" id="IPR001295">
    <property type="entry name" value="Dihydroorotate_DH_CS"/>
</dbReference>
<dbReference type="NCBIfam" id="NF003645">
    <property type="entry name" value="PRK05286.1-2"/>
    <property type="match status" value="1"/>
</dbReference>
<dbReference type="NCBIfam" id="NF003652">
    <property type="entry name" value="PRK05286.2-5"/>
    <property type="match status" value="1"/>
</dbReference>
<dbReference type="NCBIfam" id="TIGR01036">
    <property type="entry name" value="pyrD_sub2"/>
    <property type="match status" value="1"/>
</dbReference>
<dbReference type="PANTHER" id="PTHR48109:SF4">
    <property type="entry name" value="DIHYDROOROTATE DEHYDROGENASE (QUINONE), MITOCHONDRIAL"/>
    <property type="match status" value="1"/>
</dbReference>
<dbReference type="PANTHER" id="PTHR48109">
    <property type="entry name" value="DIHYDROOROTATE DEHYDROGENASE (QUINONE), MITOCHONDRIAL-RELATED"/>
    <property type="match status" value="1"/>
</dbReference>
<dbReference type="Pfam" id="PF01180">
    <property type="entry name" value="DHO_dh"/>
    <property type="match status" value="1"/>
</dbReference>
<dbReference type="SUPFAM" id="SSF51395">
    <property type="entry name" value="FMN-linked oxidoreductases"/>
    <property type="match status" value="1"/>
</dbReference>
<dbReference type="PROSITE" id="PS00911">
    <property type="entry name" value="DHODEHASE_1"/>
    <property type="match status" value="1"/>
</dbReference>
<dbReference type="PROSITE" id="PS00912">
    <property type="entry name" value="DHODEHASE_2"/>
    <property type="match status" value="1"/>
</dbReference>
<gene>
    <name evidence="1" type="primary">pyrD</name>
    <name type="ordered locus">BAB1_0341</name>
</gene>
<name>PYRD_BRUA2</name>
<sequence length="364" mass="39257">MSGLFETLGRRALFTFDAEQAHGLSITGLKTGIVTCRTPEDPALSVKVAGLKFPNPLGMAAGYDKNAEVPDALLKLGFGFAEVGTLTPRPQSGNPRPRIFRLVDDKAVINRLGFNNEGHEAAFKRLSRRAGKSGIVGVNIGANKDAEDRIADYVAGIRRFYLLARYFTVNISSPNTPGLRNLQAREALHELLSRVLEARDEEGNMCTLKRPVFLKIAPDLTDEELDDIAAEADAQKLDGIIVSNTTLSRSGLKNPENSNETGGLSGAPLFERSTVVLARMRERVGPDMPLIGVGGIDSAETALAKIKAGADLVQLYTGLIYRGPGLPGEILRGLSTAIKHEGVSSIAELRDRDTKEWAARKLIS</sequence>